<proteinExistence type="inferred from homology"/>
<name>RPOA_RHOP2</name>
<accession>Q2IXN6</accession>
<comment type="function">
    <text evidence="1">DNA-dependent RNA polymerase catalyzes the transcription of DNA into RNA using the four ribonucleoside triphosphates as substrates.</text>
</comment>
<comment type="catalytic activity">
    <reaction evidence="1">
        <text>RNA(n) + a ribonucleoside 5'-triphosphate = RNA(n+1) + diphosphate</text>
        <dbReference type="Rhea" id="RHEA:21248"/>
        <dbReference type="Rhea" id="RHEA-COMP:14527"/>
        <dbReference type="Rhea" id="RHEA-COMP:17342"/>
        <dbReference type="ChEBI" id="CHEBI:33019"/>
        <dbReference type="ChEBI" id="CHEBI:61557"/>
        <dbReference type="ChEBI" id="CHEBI:140395"/>
        <dbReference type="EC" id="2.7.7.6"/>
    </reaction>
</comment>
<comment type="subunit">
    <text evidence="1">Homodimer. The RNAP catalytic core consists of 2 alpha, 1 beta, 1 beta' and 1 omega subunit. When a sigma factor is associated with the core the holoenzyme is formed, which can initiate transcription.</text>
</comment>
<comment type="domain">
    <text evidence="1">The N-terminal domain is essential for RNAP assembly and basal transcription, whereas the C-terminal domain is involved in interaction with transcriptional regulators and with upstream promoter elements.</text>
</comment>
<comment type="similarity">
    <text evidence="1">Belongs to the RNA polymerase alpha chain family.</text>
</comment>
<evidence type="ECO:0000255" key="1">
    <source>
        <dbReference type="HAMAP-Rule" id="MF_00059"/>
    </source>
</evidence>
<sequence>MTIQKNWQELIRPNKLQVTAGSDATRFATLVAEPLERGFGQTLGNALRRVLLSSLQGAAVQSVHIDGVLHEFSSIAGVREDVTDIVLNIKDISLKMQGEGPKRMVVKKQGPGVVTAGDIQTVGDIVVLNPDLQICTLDEGAEIRMEFTVNTGKGYVAAERNRPEDAPIGLIPVDSLYSPVRKVSYKVENTREGQILDYDKLTMTVETNGALTPDDAVAFAARILQDQLNVFVNFEEPRKEVTQEIIPDLAFNPAFLKKVDELELSVRSANCLKNDNIVYIGDLVQKSEAEMLRTPNFGRKSLNEIKEVLAQMGLHLGMEVPGWPPENIDELAKRFEDHY</sequence>
<gene>
    <name evidence="1" type="primary">rpoA</name>
    <name type="ordered locus">RPB_2319</name>
</gene>
<dbReference type="EC" id="2.7.7.6" evidence="1"/>
<dbReference type="EMBL" id="CP000250">
    <property type="protein sequence ID" value="ABD07024.1"/>
    <property type="molecule type" value="Genomic_DNA"/>
</dbReference>
<dbReference type="RefSeq" id="WP_011441209.1">
    <property type="nucleotide sequence ID" value="NC_007778.1"/>
</dbReference>
<dbReference type="SMR" id="Q2IXN6"/>
<dbReference type="STRING" id="316058.RPB_2319"/>
<dbReference type="KEGG" id="rpb:RPB_2319"/>
<dbReference type="eggNOG" id="COG0202">
    <property type="taxonomic scope" value="Bacteria"/>
</dbReference>
<dbReference type="HOGENOM" id="CLU_053084_0_0_5"/>
<dbReference type="OrthoDB" id="9805706at2"/>
<dbReference type="Proteomes" id="UP000008809">
    <property type="component" value="Chromosome"/>
</dbReference>
<dbReference type="GO" id="GO:0005737">
    <property type="term" value="C:cytoplasm"/>
    <property type="evidence" value="ECO:0007669"/>
    <property type="project" value="UniProtKB-ARBA"/>
</dbReference>
<dbReference type="GO" id="GO:0000428">
    <property type="term" value="C:DNA-directed RNA polymerase complex"/>
    <property type="evidence" value="ECO:0007669"/>
    <property type="project" value="UniProtKB-KW"/>
</dbReference>
<dbReference type="GO" id="GO:0003677">
    <property type="term" value="F:DNA binding"/>
    <property type="evidence" value="ECO:0007669"/>
    <property type="project" value="UniProtKB-UniRule"/>
</dbReference>
<dbReference type="GO" id="GO:0003899">
    <property type="term" value="F:DNA-directed RNA polymerase activity"/>
    <property type="evidence" value="ECO:0007669"/>
    <property type="project" value="UniProtKB-UniRule"/>
</dbReference>
<dbReference type="GO" id="GO:0046983">
    <property type="term" value="F:protein dimerization activity"/>
    <property type="evidence" value="ECO:0007669"/>
    <property type="project" value="InterPro"/>
</dbReference>
<dbReference type="GO" id="GO:0006351">
    <property type="term" value="P:DNA-templated transcription"/>
    <property type="evidence" value="ECO:0007669"/>
    <property type="project" value="UniProtKB-UniRule"/>
</dbReference>
<dbReference type="CDD" id="cd06928">
    <property type="entry name" value="RNAP_alpha_NTD"/>
    <property type="match status" value="1"/>
</dbReference>
<dbReference type="FunFam" id="1.10.150.20:FF:000001">
    <property type="entry name" value="DNA-directed RNA polymerase subunit alpha"/>
    <property type="match status" value="1"/>
</dbReference>
<dbReference type="FunFam" id="2.170.120.12:FF:000001">
    <property type="entry name" value="DNA-directed RNA polymerase subunit alpha"/>
    <property type="match status" value="1"/>
</dbReference>
<dbReference type="Gene3D" id="1.10.150.20">
    <property type="entry name" value="5' to 3' exonuclease, C-terminal subdomain"/>
    <property type="match status" value="1"/>
</dbReference>
<dbReference type="Gene3D" id="2.170.120.12">
    <property type="entry name" value="DNA-directed RNA polymerase, insert domain"/>
    <property type="match status" value="1"/>
</dbReference>
<dbReference type="Gene3D" id="3.30.1360.10">
    <property type="entry name" value="RNA polymerase, RBP11-like subunit"/>
    <property type="match status" value="1"/>
</dbReference>
<dbReference type="HAMAP" id="MF_00059">
    <property type="entry name" value="RNApol_bact_RpoA"/>
    <property type="match status" value="1"/>
</dbReference>
<dbReference type="InterPro" id="IPR011262">
    <property type="entry name" value="DNA-dir_RNA_pol_insert"/>
</dbReference>
<dbReference type="InterPro" id="IPR011263">
    <property type="entry name" value="DNA-dir_RNA_pol_RpoA/D/Rpb3"/>
</dbReference>
<dbReference type="InterPro" id="IPR011773">
    <property type="entry name" value="DNA-dir_RpoA"/>
</dbReference>
<dbReference type="InterPro" id="IPR036603">
    <property type="entry name" value="RBP11-like"/>
</dbReference>
<dbReference type="InterPro" id="IPR011260">
    <property type="entry name" value="RNAP_asu_C"/>
</dbReference>
<dbReference type="InterPro" id="IPR036643">
    <property type="entry name" value="RNApol_insert_sf"/>
</dbReference>
<dbReference type="NCBIfam" id="NF003513">
    <property type="entry name" value="PRK05182.1-2"/>
    <property type="match status" value="1"/>
</dbReference>
<dbReference type="NCBIfam" id="NF003519">
    <property type="entry name" value="PRK05182.2-5"/>
    <property type="match status" value="1"/>
</dbReference>
<dbReference type="NCBIfam" id="TIGR02027">
    <property type="entry name" value="rpoA"/>
    <property type="match status" value="1"/>
</dbReference>
<dbReference type="Pfam" id="PF01000">
    <property type="entry name" value="RNA_pol_A_bac"/>
    <property type="match status" value="1"/>
</dbReference>
<dbReference type="Pfam" id="PF03118">
    <property type="entry name" value="RNA_pol_A_CTD"/>
    <property type="match status" value="1"/>
</dbReference>
<dbReference type="Pfam" id="PF01193">
    <property type="entry name" value="RNA_pol_L"/>
    <property type="match status" value="1"/>
</dbReference>
<dbReference type="SMART" id="SM00662">
    <property type="entry name" value="RPOLD"/>
    <property type="match status" value="1"/>
</dbReference>
<dbReference type="SUPFAM" id="SSF47789">
    <property type="entry name" value="C-terminal domain of RNA polymerase alpha subunit"/>
    <property type="match status" value="1"/>
</dbReference>
<dbReference type="SUPFAM" id="SSF56553">
    <property type="entry name" value="Insert subdomain of RNA polymerase alpha subunit"/>
    <property type="match status" value="1"/>
</dbReference>
<dbReference type="SUPFAM" id="SSF55257">
    <property type="entry name" value="RBP11-like subunits of RNA polymerase"/>
    <property type="match status" value="1"/>
</dbReference>
<protein>
    <recommendedName>
        <fullName evidence="1">DNA-directed RNA polymerase subunit alpha</fullName>
        <shortName evidence="1">RNAP subunit alpha</shortName>
        <ecNumber evidence="1">2.7.7.6</ecNumber>
    </recommendedName>
    <alternativeName>
        <fullName evidence="1">RNA polymerase subunit alpha</fullName>
    </alternativeName>
    <alternativeName>
        <fullName evidence="1">Transcriptase subunit alpha</fullName>
    </alternativeName>
</protein>
<organism>
    <name type="scientific">Rhodopseudomonas palustris (strain HaA2)</name>
    <dbReference type="NCBI Taxonomy" id="316058"/>
    <lineage>
        <taxon>Bacteria</taxon>
        <taxon>Pseudomonadati</taxon>
        <taxon>Pseudomonadota</taxon>
        <taxon>Alphaproteobacteria</taxon>
        <taxon>Hyphomicrobiales</taxon>
        <taxon>Nitrobacteraceae</taxon>
        <taxon>Rhodopseudomonas</taxon>
    </lineage>
</organism>
<feature type="chain" id="PRO_0000264536" description="DNA-directed RNA polymerase subunit alpha">
    <location>
        <begin position="1"/>
        <end position="339"/>
    </location>
</feature>
<feature type="region of interest" description="Alpha N-terminal domain (alpha-NTD)" evidence="1">
    <location>
        <begin position="1"/>
        <end position="235"/>
    </location>
</feature>
<feature type="region of interest" description="Alpha C-terminal domain (alpha-CTD)" evidence="1">
    <location>
        <begin position="251"/>
        <end position="339"/>
    </location>
</feature>
<keyword id="KW-0240">DNA-directed RNA polymerase</keyword>
<keyword id="KW-0548">Nucleotidyltransferase</keyword>
<keyword id="KW-1185">Reference proteome</keyword>
<keyword id="KW-0804">Transcription</keyword>
<keyword id="KW-0808">Transferase</keyword>
<reference key="1">
    <citation type="submission" date="2006-01" db="EMBL/GenBank/DDBJ databases">
        <title>Complete sequence of Rhodopseudomonas palustris HaA2.</title>
        <authorList>
            <consortium name="US DOE Joint Genome Institute"/>
            <person name="Copeland A."/>
            <person name="Lucas S."/>
            <person name="Lapidus A."/>
            <person name="Barry K."/>
            <person name="Detter J.C."/>
            <person name="Glavina T."/>
            <person name="Hammon N."/>
            <person name="Israni S."/>
            <person name="Pitluck S."/>
            <person name="Chain P."/>
            <person name="Malfatti S."/>
            <person name="Shin M."/>
            <person name="Vergez L."/>
            <person name="Schmutz J."/>
            <person name="Larimer F."/>
            <person name="Land M."/>
            <person name="Hauser L."/>
            <person name="Pelletier D.A."/>
            <person name="Kyrpides N."/>
            <person name="Anderson I."/>
            <person name="Oda Y."/>
            <person name="Harwood C.S."/>
            <person name="Richardson P."/>
        </authorList>
    </citation>
    <scope>NUCLEOTIDE SEQUENCE [LARGE SCALE GENOMIC DNA]</scope>
    <source>
        <strain>HaA2</strain>
    </source>
</reference>